<gene>
    <name evidence="1" type="primary">rpsO</name>
    <name type="ordered locus">BbuZS7_0834</name>
</gene>
<name>RS15_BORBZ</name>
<sequence length="88" mass="10217">MIDKKQKQKIVSEFGKNESDTGSVGVQIALITGRIKYLTEHLKINKKDHSSKRGLLKLVGQRRSLLRYYQKKDLEAYRMLISKLGLRK</sequence>
<protein>
    <recommendedName>
        <fullName evidence="1">Small ribosomal subunit protein uS15</fullName>
    </recommendedName>
    <alternativeName>
        <fullName evidence="2">30S ribosomal protein S15</fullName>
    </alternativeName>
</protein>
<keyword id="KW-0687">Ribonucleoprotein</keyword>
<keyword id="KW-0689">Ribosomal protein</keyword>
<keyword id="KW-0694">RNA-binding</keyword>
<keyword id="KW-0699">rRNA-binding</keyword>
<reference key="1">
    <citation type="journal article" date="2011" name="J. Bacteriol.">
        <title>Whole-genome sequences of thirteen isolates of Borrelia burgdorferi.</title>
        <authorList>
            <person name="Schutzer S.E."/>
            <person name="Fraser-Liggett C.M."/>
            <person name="Casjens S.R."/>
            <person name="Qiu W.G."/>
            <person name="Dunn J.J."/>
            <person name="Mongodin E.F."/>
            <person name="Luft B.J."/>
        </authorList>
    </citation>
    <scope>NUCLEOTIDE SEQUENCE [LARGE SCALE GENOMIC DNA]</scope>
    <source>
        <strain>ZS7</strain>
    </source>
</reference>
<evidence type="ECO:0000255" key="1">
    <source>
        <dbReference type="HAMAP-Rule" id="MF_01343"/>
    </source>
</evidence>
<evidence type="ECO:0000305" key="2"/>
<organism>
    <name type="scientific">Borreliella burgdorferi (strain ZS7)</name>
    <name type="common">Borrelia burgdorferi</name>
    <dbReference type="NCBI Taxonomy" id="445985"/>
    <lineage>
        <taxon>Bacteria</taxon>
        <taxon>Pseudomonadati</taxon>
        <taxon>Spirochaetota</taxon>
        <taxon>Spirochaetia</taxon>
        <taxon>Spirochaetales</taxon>
        <taxon>Borreliaceae</taxon>
        <taxon>Borreliella</taxon>
    </lineage>
</organism>
<feature type="chain" id="PRO_1000143080" description="Small ribosomal subunit protein uS15">
    <location>
        <begin position="1"/>
        <end position="88"/>
    </location>
</feature>
<proteinExistence type="inferred from homology"/>
<dbReference type="EMBL" id="CP001205">
    <property type="protein sequence ID" value="ACK74731.1"/>
    <property type="molecule type" value="Genomic_DNA"/>
</dbReference>
<dbReference type="RefSeq" id="WP_002557393.1">
    <property type="nucleotide sequence ID" value="NC_011728.1"/>
</dbReference>
<dbReference type="SMR" id="B7J0Q0"/>
<dbReference type="GeneID" id="56567383"/>
<dbReference type="KEGG" id="bbz:BbuZS7_0834"/>
<dbReference type="HOGENOM" id="CLU_148518_0_0_12"/>
<dbReference type="Proteomes" id="UP000006901">
    <property type="component" value="Chromosome"/>
</dbReference>
<dbReference type="GO" id="GO:0022627">
    <property type="term" value="C:cytosolic small ribosomal subunit"/>
    <property type="evidence" value="ECO:0007669"/>
    <property type="project" value="TreeGrafter"/>
</dbReference>
<dbReference type="GO" id="GO:0019843">
    <property type="term" value="F:rRNA binding"/>
    <property type="evidence" value="ECO:0007669"/>
    <property type="project" value="UniProtKB-UniRule"/>
</dbReference>
<dbReference type="GO" id="GO:0003735">
    <property type="term" value="F:structural constituent of ribosome"/>
    <property type="evidence" value="ECO:0007669"/>
    <property type="project" value="InterPro"/>
</dbReference>
<dbReference type="GO" id="GO:0006412">
    <property type="term" value="P:translation"/>
    <property type="evidence" value="ECO:0007669"/>
    <property type="project" value="UniProtKB-UniRule"/>
</dbReference>
<dbReference type="CDD" id="cd00353">
    <property type="entry name" value="Ribosomal_S15p_S13e"/>
    <property type="match status" value="1"/>
</dbReference>
<dbReference type="FunFam" id="1.10.287.10:FF:000002">
    <property type="entry name" value="30S ribosomal protein S15"/>
    <property type="match status" value="1"/>
</dbReference>
<dbReference type="Gene3D" id="6.10.250.3130">
    <property type="match status" value="1"/>
</dbReference>
<dbReference type="Gene3D" id="1.10.287.10">
    <property type="entry name" value="S15/NS1, RNA-binding"/>
    <property type="match status" value="1"/>
</dbReference>
<dbReference type="HAMAP" id="MF_01343_B">
    <property type="entry name" value="Ribosomal_uS15_B"/>
    <property type="match status" value="1"/>
</dbReference>
<dbReference type="InterPro" id="IPR000589">
    <property type="entry name" value="Ribosomal_uS15"/>
</dbReference>
<dbReference type="InterPro" id="IPR005290">
    <property type="entry name" value="Ribosomal_uS15_bac-type"/>
</dbReference>
<dbReference type="InterPro" id="IPR009068">
    <property type="entry name" value="uS15_NS1_RNA-bd_sf"/>
</dbReference>
<dbReference type="NCBIfam" id="TIGR00952">
    <property type="entry name" value="S15_bact"/>
    <property type="match status" value="1"/>
</dbReference>
<dbReference type="PANTHER" id="PTHR23321">
    <property type="entry name" value="RIBOSOMAL PROTEIN S15, BACTERIAL AND ORGANELLAR"/>
    <property type="match status" value="1"/>
</dbReference>
<dbReference type="PANTHER" id="PTHR23321:SF26">
    <property type="entry name" value="SMALL RIBOSOMAL SUBUNIT PROTEIN US15M"/>
    <property type="match status" value="1"/>
</dbReference>
<dbReference type="Pfam" id="PF00312">
    <property type="entry name" value="Ribosomal_S15"/>
    <property type="match status" value="1"/>
</dbReference>
<dbReference type="SMART" id="SM01387">
    <property type="entry name" value="Ribosomal_S15"/>
    <property type="match status" value="1"/>
</dbReference>
<dbReference type="SUPFAM" id="SSF47060">
    <property type="entry name" value="S15/NS1 RNA-binding domain"/>
    <property type="match status" value="1"/>
</dbReference>
<dbReference type="PROSITE" id="PS00362">
    <property type="entry name" value="RIBOSOMAL_S15"/>
    <property type="match status" value="1"/>
</dbReference>
<comment type="function">
    <text evidence="1">One of the primary rRNA binding proteins, it binds directly to 16S rRNA where it helps nucleate assembly of the platform of the 30S subunit by binding and bridging several RNA helices of the 16S rRNA.</text>
</comment>
<comment type="function">
    <text evidence="1">Forms an intersubunit bridge (bridge B4) with the 23S rRNA of the 50S subunit in the ribosome.</text>
</comment>
<comment type="subunit">
    <text evidence="1">Part of the 30S ribosomal subunit. Forms a bridge to the 50S subunit in the 70S ribosome, contacting the 23S rRNA.</text>
</comment>
<comment type="similarity">
    <text evidence="1">Belongs to the universal ribosomal protein uS15 family.</text>
</comment>
<accession>B7J0Q0</accession>